<comment type="catalytic activity">
    <reaction evidence="1">
        <text>tRNA(Lys) + L-lysine + ATP = L-lysyl-tRNA(Lys) + AMP + diphosphate</text>
        <dbReference type="Rhea" id="RHEA:20792"/>
        <dbReference type="Rhea" id="RHEA-COMP:9696"/>
        <dbReference type="Rhea" id="RHEA-COMP:9697"/>
        <dbReference type="ChEBI" id="CHEBI:30616"/>
        <dbReference type="ChEBI" id="CHEBI:32551"/>
        <dbReference type="ChEBI" id="CHEBI:33019"/>
        <dbReference type="ChEBI" id="CHEBI:78442"/>
        <dbReference type="ChEBI" id="CHEBI:78529"/>
        <dbReference type="ChEBI" id="CHEBI:456215"/>
        <dbReference type="EC" id="6.1.1.6"/>
    </reaction>
</comment>
<comment type="cofactor">
    <cofactor evidence="1">
        <name>Mg(2+)</name>
        <dbReference type="ChEBI" id="CHEBI:18420"/>
    </cofactor>
    <text evidence="1">Binds 3 Mg(2+) ions per subunit.</text>
</comment>
<comment type="subunit">
    <text evidence="1">Homodimer.</text>
</comment>
<comment type="subcellular location">
    <subcellularLocation>
        <location evidence="1">Cytoplasm</location>
    </subcellularLocation>
</comment>
<comment type="similarity">
    <text evidence="1">Belongs to the class-II aminoacyl-tRNA synthetase family.</text>
</comment>
<keyword id="KW-0030">Aminoacyl-tRNA synthetase</keyword>
<keyword id="KW-0067">ATP-binding</keyword>
<keyword id="KW-0963">Cytoplasm</keyword>
<keyword id="KW-0436">Ligase</keyword>
<keyword id="KW-0460">Magnesium</keyword>
<keyword id="KW-0479">Metal-binding</keyword>
<keyword id="KW-0547">Nucleotide-binding</keyword>
<keyword id="KW-0648">Protein biosynthesis</keyword>
<keyword id="KW-1185">Reference proteome</keyword>
<dbReference type="EC" id="6.1.1.6" evidence="1"/>
<dbReference type="EMBL" id="AL646052">
    <property type="protein sequence ID" value="CAD14730.1"/>
    <property type="molecule type" value="Genomic_DNA"/>
</dbReference>
<dbReference type="RefSeq" id="WP_011000980.1">
    <property type="nucleotide sequence ID" value="NC_003295.1"/>
</dbReference>
<dbReference type="SMR" id="Q8Y0L5"/>
<dbReference type="STRING" id="267608.RSc1028"/>
<dbReference type="EnsemblBacteria" id="CAD14730">
    <property type="protein sequence ID" value="CAD14730"/>
    <property type="gene ID" value="RSc1028"/>
</dbReference>
<dbReference type="KEGG" id="rso:RSc1028"/>
<dbReference type="PATRIC" id="fig|267608.8.peg.1045"/>
<dbReference type="eggNOG" id="COG1190">
    <property type="taxonomic scope" value="Bacteria"/>
</dbReference>
<dbReference type="HOGENOM" id="CLU_008255_6_2_4"/>
<dbReference type="Proteomes" id="UP000001436">
    <property type="component" value="Chromosome"/>
</dbReference>
<dbReference type="GO" id="GO:0005829">
    <property type="term" value="C:cytosol"/>
    <property type="evidence" value="ECO:0007669"/>
    <property type="project" value="TreeGrafter"/>
</dbReference>
<dbReference type="GO" id="GO:0005524">
    <property type="term" value="F:ATP binding"/>
    <property type="evidence" value="ECO:0007669"/>
    <property type="project" value="UniProtKB-UniRule"/>
</dbReference>
<dbReference type="GO" id="GO:0004824">
    <property type="term" value="F:lysine-tRNA ligase activity"/>
    <property type="evidence" value="ECO:0007669"/>
    <property type="project" value="UniProtKB-UniRule"/>
</dbReference>
<dbReference type="GO" id="GO:0000287">
    <property type="term" value="F:magnesium ion binding"/>
    <property type="evidence" value="ECO:0007669"/>
    <property type="project" value="UniProtKB-UniRule"/>
</dbReference>
<dbReference type="GO" id="GO:0000049">
    <property type="term" value="F:tRNA binding"/>
    <property type="evidence" value="ECO:0007669"/>
    <property type="project" value="TreeGrafter"/>
</dbReference>
<dbReference type="GO" id="GO:0006430">
    <property type="term" value="P:lysyl-tRNA aminoacylation"/>
    <property type="evidence" value="ECO:0007669"/>
    <property type="project" value="UniProtKB-UniRule"/>
</dbReference>
<dbReference type="CDD" id="cd00775">
    <property type="entry name" value="LysRS_core"/>
    <property type="match status" value="1"/>
</dbReference>
<dbReference type="CDD" id="cd04322">
    <property type="entry name" value="LysRS_N"/>
    <property type="match status" value="1"/>
</dbReference>
<dbReference type="FunFam" id="2.40.50.140:FF:000024">
    <property type="entry name" value="Lysine--tRNA ligase"/>
    <property type="match status" value="1"/>
</dbReference>
<dbReference type="FunFam" id="3.30.930.10:FF:000001">
    <property type="entry name" value="Lysine--tRNA ligase"/>
    <property type="match status" value="1"/>
</dbReference>
<dbReference type="Gene3D" id="3.30.930.10">
    <property type="entry name" value="Bira Bifunctional Protein, Domain 2"/>
    <property type="match status" value="1"/>
</dbReference>
<dbReference type="Gene3D" id="2.40.50.140">
    <property type="entry name" value="Nucleic acid-binding proteins"/>
    <property type="match status" value="1"/>
</dbReference>
<dbReference type="HAMAP" id="MF_00252">
    <property type="entry name" value="Lys_tRNA_synth_class2"/>
    <property type="match status" value="1"/>
</dbReference>
<dbReference type="InterPro" id="IPR004364">
    <property type="entry name" value="Aa-tRNA-synt_II"/>
</dbReference>
<dbReference type="InterPro" id="IPR006195">
    <property type="entry name" value="aa-tRNA-synth_II"/>
</dbReference>
<dbReference type="InterPro" id="IPR045864">
    <property type="entry name" value="aa-tRNA-synth_II/BPL/LPL"/>
</dbReference>
<dbReference type="InterPro" id="IPR002313">
    <property type="entry name" value="Lys-tRNA-ligase_II"/>
</dbReference>
<dbReference type="InterPro" id="IPR044136">
    <property type="entry name" value="Lys-tRNA-ligase_II_N"/>
</dbReference>
<dbReference type="InterPro" id="IPR018149">
    <property type="entry name" value="Lys-tRNA-synth_II_C"/>
</dbReference>
<dbReference type="InterPro" id="IPR012340">
    <property type="entry name" value="NA-bd_OB-fold"/>
</dbReference>
<dbReference type="InterPro" id="IPR004365">
    <property type="entry name" value="NA-bd_OB_tRNA"/>
</dbReference>
<dbReference type="NCBIfam" id="TIGR00499">
    <property type="entry name" value="lysS_bact"/>
    <property type="match status" value="1"/>
</dbReference>
<dbReference type="NCBIfam" id="NF001756">
    <property type="entry name" value="PRK00484.1"/>
    <property type="match status" value="1"/>
</dbReference>
<dbReference type="PANTHER" id="PTHR42918:SF15">
    <property type="entry name" value="LYSINE--TRNA LIGASE, CHLOROPLASTIC_MITOCHONDRIAL"/>
    <property type="match status" value="1"/>
</dbReference>
<dbReference type="PANTHER" id="PTHR42918">
    <property type="entry name" value="LYSYL-TRNA SYNTHETASE"/>
    <property type="match status" value="1"/>
</dbReference>
<dbReference type="Pfam" id="PF00152">
    <property type="entry name" value="tRNA-synt_2"/>
    <property type="match status" value="1"/>
</dbReference>
<dbReference type="Pfam" id="PF01336">
    <property type="entry name" value="tRNA_anti-codon"/>
    <property type="match status" value="1"/>
</dbReference>
<dbReference type="PRINTS" id="PR00982">
    <property type="entry name" value="TRNASYNTHLYS"/>
</dbReference>
<dbReference type="SUPFAM" id="SSF55681">
    <property type="entry name" value="Class II aaRS and biotin synthetases"/>
    <property type="match status" value="1"/>
</dbReference>
<dbReference type="SUPFAM" id="SSF50249">
    <property type="entry name" value="Nucleic acid-binding proteins"/>
    <property type="match status" value="1"/>
</dbReference>
<dbReference type="PROSITE" id="PS50862">
    <property type="entry name" value="AA_TRNA_LIGASE_II"/>
    <property type="match status" value="1"/>
</dbReference>
<gene>
    <name evidence="1" type="primary">lysS</name>
    <name type="ordered locus">RSc1028</name>
    <name type="ORF">RS04223</name>
</gene>
<reference key="1">
    <citation type="journal article" date="2002" name="Nature">
        <title>Genome sequence of the plant pathogen Ralstonia solanacearum.</title>
        <authorList>
            <person name="Salanoubat M."/>
            <person name="Genin S."/>
            <person name="Artiguenave F."/>
            <person name="Gouzy J."/>
            <person name="Mangenot S."/>
            <person name="Arlat M."/>
            <person name="Billault A."/>
            <person name="Brottier P."/>
            <person name="Camus J.-C."/>
            <person name="Cattolico L."/>
            <person name="Chandler M."/>
            <person name="Choisne N."/>
            <person name="Claudel-Renard C."/>
            <person name="Cunnac S."/>
            <person name="Demange N."/>
            <person name="Gaspin C."/>
            <person name="Lavie M."/>
            <person name="Moisan A."/>
            <person name="Robert C."/>
            <person name="Saurin W."/>
            <person name="Schiex T."/>
            <person name="Siguier P."/>
            <person name="Thebault P."/>
            <person name="Whalen M."/>
            <person name="Wincker P."/>
            <person name="Levy M."/>
            <person name="Weissenbach J."/>
            <person name="Boucher C.A."/>
        </authorList>
    </citation>
    <scope>NUCLEOTIDE SEQUENCE [LARGE SCALE GENOMIC DNA]</scope>
    <source>
        <strain>ATCC BAA-1114 / GMI1000</strain>
    </source>
</reference>
<proteinExistence type="inferred from homology"/>
<protein>
    <recommendedName>
        <fullName evidence="1">Lysine--tRNA ligase</fullName>
        <ecNumber evidence="1">6.1.1.6</ecNumber>
    </recommendedName>
    <alternativeName>
        <fullName evidence="1">Lysyl-tRNA synthetase</fullName>
        <shortName evidence="1">LysRS</shortName>
    </alternativeName>
</protein>
<accession>Q8Y0L5</accession>
<name>SYK_RALN1</name>
<evidence type="ECO:0000255" key="1">
    <source>
        <dbReference type="HAMAP-Rule" id="MF_00252"/>
    </source>
</evidence>
<organism>
    <name type="scientific">Ralstonia nicotianae (strain ATCC BAA-1114 / GMI1000)</name>
    <name type="common">Ralstonia solanacearum</name>
    <dbReference type="NCBI Taxonomy" id="267608"/>
    <lineage>
        <taxon>Bacteria</taxon>
        <taxon>Pseudomonadati</taxon>
        <taxon>Pseudomonadota</taxon>
        <taxon>Betaproteobacteria</taxon>
        <taxon>Burkholderiales</taxon>
        <taxon>Burkholderiaceae</taxon>
        <taxon>Ralstonia</taxon>
        <taxon>Ralstonia solanacearum species complex</taxon>
    </lineage>
</organism>
<sequence>MTEPNTPAAPTGQAQDDNQIMAERREKLAALRQQGVAYPNDFCPTHHAADLHTRYSETDQPALEAANVEVALAGRMMLKRVMGKASFATVQDGSGQIQFYITRDRVGEDVYAAFKHWDLGDIVAARGVLFRTNKGELSVQVQELRLLSKSLRPLPDKFHGLADQEMKYRQRYVDLIVSPETRNTFRARTKAIASLRHHMSDAGFMEVETPMLHPIPGGAAAKPFITHHNALDMQMFLRIAPELYLKRLIVGGFERVYEINRNFRNEGVSPRHNPEFTMMEFYAAYTDYRWLMDYTENLIRQAAIDATGSAALNYQGRELDLSKPFHRLTICQAIQKYAPQYTDAQLADANFLRAELKKFKIDTNAPQFLNAGVGTLQLVLFEETAESQLWEPTFIVDYPVEVSPLARGSDTLPGITERFELFITGREIANGFSELNDPEDQAERFRKQVEQKDAGDEEAMFYDADYIRALEYGMPPTGGCGIGIDRLVMLLTDSPNIRDVILFPHLRRED</sequence>
<feature type="chain" id="PRO_0000152671" description="Lysine--tRNA ligase">
    <location>
        <begin position="1"/>
        <end position="510"/>
    </location>
</feature>
<feature type="binding site" evidence="1">
    <location>
        <position position="420"/>
    </location>
    <ligand>
        <name>Mg(2+)</name>
        <dbReference type="ChEBI" id="CHEBI:18420"/>
        <label>1</label>
    </ligand>
</feature>
<feature type="binding site" evidence="1">
    <location>
        <position position="427"/>
    </location>
    <ligand>
        <name>Mg(2+)</name>
        <dbReference type="ChEBI" id="CHEBI:18420"/>
        <label>1</label>
    </ligand>
</feature>
<feature type="binding site" evidence="1">
    <location>
        <position position="427"/>
    </location>
    <ligand>
        <name>Mg(2+)</name>
        <dbReference type="ChEBI" id="CHEBI:18420"/>
        <label>2</label>
    </ligand>
</feature>